<keyword id="KW-0004">4Fe-4S</keyword>
<keyword id="KW-0963">Cytoplasm</keyword>
<keyword id="KW-0408">Iron</keyword>
<keyword id="KW-0411">Iron-sulfur</keyword>
<keyword id="KW-0479">Metal-binding</keyword>
<keyword id="KW-0949">S-adenosyl-L-methionine</keyword>
<keyword id="KW-0808">Transferase</keyword>
<keyword id="KW-0819">tRNA processing</keyword>
<reference key="1">
    <citation type="journal article" date="2008" name="PLoS ONE">
        <title>Genome biology of Actinobacillus pleuropneumoniae JL03, an isolate of serotype 3 prevalent in China.</title>
        <authorList>
            <person name="Xu Z."/>
            <person name="Zhou Y."/>
            <person name="Li L."/>
            <person name="Zhou R."/>
            <person name="Xiao S."/>
            <person name="Wan Y."/>
            <person name="Zhang S."/>
            <person name="Wang K."/>
            <person name="Li W."/>
            <person name="Li L."/>
            <person name="Jin H."/>
            <person name="Kang M."/>
            <person name="Dalai B."/>
            <person name="Li T."/>
            <person name="Liu L."/>
            <person name="Cheng Y."/>
            <person name="Zhang L."/>
            <person name="Xu T."/>
            <person name="Zheng H."/>
            <person name="Pu S."/>
            <person name="Wang B."/>
            <person name="Gu W."/>
            <person name="Zhang X.L."/>
            <person name="Zhu G.-F."/>
            <person name="Wang S."/>
            <person name="Zhao G.-P."/>
            <person name="Chen H."/>
        </authorList>
    </citation>
    <scope>NUCLEOTIDE SEQUENCE [LARGE SCALE GENOMIC DNA]</scope>
    <source>
        <strain>JL03</strain>
    </source>
</reference>
<proteinExistence type="inferred from homology"/>
<sequence length="475" mass="53626">MAKLHITTWGCQMNEYDSSKMADLLNSTHGLELTDKPEEADVLLLNTCSIREKAQEKVFSQLGRWKNWKKDKPDLIIGVGGCVASQEGEHIRDRAPFVDIVFGPQTLHRLPEMINKIRGGDRAIVDISFPEIEKFDRLPEPRAEGPTAFVSIMEGCNKYCSFCVVPYTRGEEVSRPVDDVLFEIAQLAEQGVREVNLLGQNVNAYRGETFDGGICTFAELLRLVAAIDGIDRVRYTTSHPIEFTDDIIEVYRDTPELVSFLHLPIQSGADRVLTMMKRNHTALEYKAIIRKLREVRPNIQISSDFIVGFPGETAEDFEQTMKVIEQVNFDMSFSFIYSARPGTPAADLPDDISEEEKKARLARLQQRINHQAMQFSRAMLGTEQRVLVEGPSKKDIMELTGRTENNRIVNFQGTPDMIGKFVDIKITDVYTNSLRGEVVRTEDEMGLRVVESAASVIARTRKEDDLGVGKYVVNL</sequence>
<feature type="chain" id="PRO_0000374093" description="tRNA-2-methylthio-N(6)-dimethylallyladenosine synthase">
    <location>
        <begin position="1"/>
        <end position="475"/>
    </location>
</feature>
<feature type="domain" description="MTTase N-terminal" evidence="1">
    <location>
        <begin position="2"/>
        <end position="119"/>
    </location>
</feature>
<feature type="domain" description="Radical SAM core" evidence="2">
    <location>
        <begin position="142"/>
        <end position="374"/>
    </location>
</feature>
<feature type="domain" description="TRAM" evidence="1">
    <location>
        <begin position="377"/>
        <end position="440"/>
    </location>
</feature>
<feature type="binding site" evidence="1">
    <location>
        <position position="11"/>
    </location>
    <ligand>
        <name>[4Fe-4S] cluster</name>
        <dbReference type="ChEBI" id="CHEBI:49883"/>
        <label>1</label>
    </ligand>
</feature>
<feature type="binding site" evidence="1">
    <location>
        <position position="48"/>
    </location>
    <ligand>
        <name>[4Fe-4S] cluster</name>
        <dbReference type="ChEBI" id="CHEBI:49883"/>
        <label>1</label>
    </ligand>
</feature>
<feature type="binding site" evidence="1">
    <location>
        <position position="82"/>
    </location>
    <ligand>
        <name>[4Fe-4S] cluster</name>
        <dbReference type="ChEBI" id="CHEBI:49883"/>
        <label>1</label>
    </ligand>
</feature>
<feature type="binding site" evidence="1">
    <location>
        <position position="156"/>
    </location>
    <ligand>
        <name>[4Fe-4S] cluster</name>
        <dbReference type="ChEBI" id="CHEBI:49883"/>
        <label>2</label>
        <note>4Fe-4S-S-AdoMet</note>
    </ligand>
</feature>
<feature type="binding site" evidence="1">
    <location>
        <position position="160"/>
    </location>
    <ligand>
        <name>[4Fe-4S] cluster</name>
        <dbReference type="ChEBI" id="CHEBI:49883"/>
        <label>2</label>
        <note>4Fe-4S-S-AdoMet</note>
    </ligand>
</feature>
<feature type="binding site" evidence="1">
    <location>
        <position position="163"/>
    </location>
    <ligand>
        <name>[4Fe-4S] cluster</name>
        <dbReference type="ChEBI" id="CHEBI:49883"/>
        <label>2</label>
        <note>4Fe-4S-S-AdoMet</note>
    </ligand>
</feature>
<accession>B0BQR0</accession>
<protein>
    <recommendedName>
        <fullName evidence="1">tRNA-2-methylthio-N(6)-dimethylallyladenosine synthase</fullName>
        <ecNumber evidence="1">2.8.4.3</ecNumber>
    </recommendedName>
    <alternativeName>
        <fullName evidence="1">(Dimethylallyl)adenosine tRNA methylthiotransferase MiaB</fullName>
    </alternativeName>
    <alternativeName>
        <fullName evidence="1">tRNA-i(6)A37 methylthiotransferase</fullName>
    </alternativeName>
</protein>
<organism>
    <name type="scientific">Actinobacillus pleuropneumoniae serotype 3 (strain JL03)</name>
    <dbReference type="NCBI Taxonomy" id="434271"/>
    <lineage>
        <taxon>Bacteria</taxon>
        <taxon>Pseudomonadati</taxon>
        <taxon>Pseudomonadota</taxon>
        <taxon>Gammaproteobacteria</taxon>
        <taxon>Pasteurellales</taxon>
        <taxon>Pasteurellaceae</taxon>
        <taxon>Actinobacillus</taxon>
    </lineage>
</organism>
<evidence type="ECO:0000255" key="1">
    <source>
        <dbReference type="HAMAP-Rule" id="MF_01864"/>
    </source>
</evidence>
<evidence type="ECO:0000255" key="2">
    <source>
        <dbReference type="PROSITE-ProRule" id="PRU01266"/>
    </source>
</evidence>
<evidence type="ECO:0000305" key="3"/>
<gene>
    <name evidence="1" type="primary">miaB</name>
    <name type="ordered locus">APJL_1339</name>
</gene>
<comment type="function">
    <text evidence="1">Catalyzes the methylthiolation of N6-(dimethylallyl)adenosine (i(6)A), leading to the formation of 2-methylthio-N6-(dimethylallyl)adenosine (ms(2)i(6)A) at position 37 in tRNAs that read codons beginning with uridine.</text>
</comment>
<comment type="catalytic activity">
    <reaction evidence="1">
        <text>N(6)-dimethylallyladenosine(37) in tRNA + (sulfur carrier)-SH + AH2 + 2 S-adenosyl-L-methionine = 2-methylsulfanyl-N(6)-dimethylallyladenosine(37) in tRNA + (sulfur carrier)-H + 5'-deoxyadenosine + L-methionine + A + S-adenosyl-L-homocysteine + 2 H(+)</text>
        <dbReference type="Rhea" id="RHEA:37067"/>
        <dbReference type="Rhea" id="RHEA-COMP:10375"/>
        <dbReference type="Rhea" id="RHEA-COMP:10376"/>
        <dbReference type="Rhea" id="RHEA-COMP:14737"/>
        <dbReference type="Rhea" id="RHEA-COMP:14739"/>
        <dbReference type="ChEBI" id="CHEBI:13193"/>
        <dbReference type="ChEBI" id="CHEBI:15378"/>
        <dbReference type="ChEBI" id="CHEBI:17319"/>
        <dbReference type="ChEBI" id="CHEBI:17499"/>
        <dbReference type="ChEBI" id="CHEBI:29917"/>
        <dbReference type="ChEBI" id="CHEBI:57844"/>
        <dbReference type="ChEBI" id="CHEBI:57856"/>
        <dbReference type="ChEBI" id="CHEBI:59789"/>
        <dbReference type="ChEBI" id="CHEBI:64428"/>
        <dbReference type="ChEBI" id="CHEBI:74415"/>
        <dbReference type="ChEBI" id="CHEBI:74417"/>
        <dbReference type="EC" id="2.8.4.3"/>
    </reaction>
</comment>
<comment type="cofactor">
    <cofactor evidence="1">
        <name>[4Fe-4S] cluster</name>
        <dbReference type="ChEBI" id="CHEBI:49883"/>
    </cofactor>
    <text evidence="1">Binds 2 [4Fe-4S] clusters. One cluster is coordinated with 3 cysteines and an exchangeable S-adenosyl-L-methionine.</text>
</comment>
<comment type="subunit">
    <text evidence="1">Monomer.</text>
</comment>
<comment type="subcellular location">
    <subcellularLocation>
        <location evidence="1">Cytoplasm</location>
    </subcellularLocation>
</comment>
<comment type="similarity">
    <text evidence="1">Belongs to the methylthiotransferase family. MiaB subfamily.</text>
</comment>
<comment type="sequence caution" evidence="3">
    <conflict type="erroneous initiation">
        <sequence resource="EMBL-CDS" id="ABY69895"/>
    </conflict>
</comment>
<name>MIAB_ACTPJ</name>
<dbReference type="EC" id="2.8.4.3" evidence="1"/>
<dbReference type="EMBL" id="CP000687">
    <property type="protein sequence ID" value="ABY69895.1"/>
    <property type="status" value="ALT_INIT"/>
    <property type="molecule type" value="Genomic_DNA"/>
</dbReference>
<dbReference type="RefSeq" id="WP_005601898.1">
    <property type="nucleotide sequence ID" value="NC_010278.1"/>
</dbReference>
<dbReference type="SMR" id="B0BQR0"/>
<dbReference type="KEGG" id="apj:APJL_1339"/>
<dbReference type="HOGENOM" id="CLU_018697_2_0_6"/>
<dbReference type="Proteomes" id="UP000008547">
    <property type="component" value="Chromosome"/>
</dbReference>
<dbReference type="GO" id="GO:0005829">
    <property type="term" value="C:cytosol"/>
    <property type="evidence" value="ECO:0007669"/>
    <property type="project" value="TreeGrafter"/>
</dbReference>
<dbReference type="GO" id="GO:0051539">
    <property type="term" value="F:4 iron, 4 sulfur cluster binding"/>
    <property type="evidence" value="ECO:0007669"/>
    <property type="project" value="UniProtKB-UniRule"/>
</dbReference>
<dbReference type="GO" id="GO:0046872">
    <property type="term" value="F:metal ion binding"/>
    <property type="evidence" value="ECO:0007669"/>
    <property type="project" value="UniProtKB-KW"/>
</dbReference>
<dbReference type="GO" id="GO:0035597">
    <property type="term" value="F:N6-isopentenyladenosine methylthiotransferase activity"/>
    <property type="evidence" value="ECO:0007669"/>
    <property type="project" value="TreeGrafter"/>
</dbReference>
<dbReference type="CDD" id="cd01335">
    <property type="entry name" value="Radical_SAM"/>
    <property type="match status" value="1"/>
</dbReference>
<dbReference type="FunFam" id="3.40.50.12160:FF:000001">
    <property type="entry name" value="tRNA-2-methylthio-N(6)-dimethylallyladenosine synthase"/>
    <property type="match status" value="1"/>
</dbReference>
<dbReference type="FunFam" id="3.80.30.20:FF:000001">
    <property type="entry name" value="tRNA-2-methylthio-N(6)-dimethylallyladenosine synthase 2"/>
    <property type="match status" value="1"/>
</dbReference>
<dbReference type="Gene3D" id="3.40.50.12160">
    <property type="entry name" value="Methylthiotransferase, N-terminal domain"/>
    <property type="match status" value="1"/>
</dbReference>
<dbReference type="Gene3D" id="3.80.30.20">
    <property type="entry name" value="tm_1862 like domain"/>
    <property type="match status" value="1"/>
</dbReference>
<dbReference type="HAMAP" id="MF_01864">
    <property type="entry name" value="tRNA_metthiotr_MiaB"/>
    <property type="match status" value="1"/>
</dbReference>
<dbReference type="InterPro" id="IPR006638">
    <property type="entry name" value="Elp3/MiaA/NifB-like_rSAM"/>
</dbReference>
<dbReference type="InterPro" id="IPR005839">
    <property type="entry name" value="Methylthiotransferase"/>
</dbReference>
<dbReference type="InterPro" id="IPR020612">
    <property type="entry name" value="Methylthiotransferase_CS"/>
</dbReference>
<dbReference type="InterPro" id="IPR013848">
    <property type="entry name" value="Methylthiotransferase_N"/>
</dbReference>
<dbReference type="InterPro" id="IPR038135">
    <property type="entry name" value="Methylthiotransferase_N_sf"/>
</dbReference>
<dbReference type="InterPro" id="IPR006463">
    <property type="entry name" value="MiaB_methiolase"/>
</dbReference>
<dbReference type="InterPro" id="IPR007197">
    <property type="entry name" value="rSAM"/>
</dbReference>
<dbReference type="InterPro" id="IPR023404">
    <property type="entry name" value="rSAM_horseshoe"/>
</dbReference>
<dbReference type="InterPro" id="IPR002792">
    <property type="entry name" value="TRAM_dom"/>
</dbReference>
<dbReference type="NCBIfam" id="TIGR01574">
    <property type="entry name" value="miaB-methiolase"/>
    <property type="match status" value="1"/>
</dbReference>
<dbReference type="NCBIfam" id="TIGR00089">
    <property type="entry name" value="MiaB/RimO family radical SAM methylthiotransferase"/>
    <property type="match status" value="1"/>
</dbReference>
<dbReference type="PANTHER" id="PTHR43020">
    <property type="entry name" value="CDK5 REGULATORY SUBUNIT-ASSOCIATED PROTEIN 1"/>
    <property type="match status" value="1"/>
</dbReference>
<dbReference type="PANTHER" id="PTHR43020:SF2">
    <property type="entry name" value="MITOCHONDRIAL TRNA METHYLTHIOTRANSFERASE CDK5RAP1"/>
    <property type="match status" value="1"/>
</dbReference>
<dbReference type="Pfam" id="PF04055">
    <property type="entry name" value="Radical_SAM"/>
    <property type="match status" value="1"/>
</dbReference>
<dbReference type="Pfam" id="PF01938">
    <property type="entry name" value="TRAM"/>
    <property type="match status" value="1"/>
</dbReference>
<dbReference type="Pfam" id="PF00919">
    <property type="entry name" value="UPF0004"/>
    <property type="match status" value="1"/>
</dbReference>
<dbReference type="SFLD" id="SFLDF00273">
    <property type="entry name" value="(dimethylallyl)adenosine_tRNA"/>
    <property type="match status" value="1"/>
</dbReference>
<dbReference type="SFLD" id="SFLDG01082">
    <property type="entry name" value="B12-binding_domain_containing"/>
    <property type="match status" value="1"/>
</dbReference>
<dbReference type="SFLD" id="SFLDG01061">
    <property type="entry name" value="methylthiotransferase"/>
    <property type="match status" value="1"/>
</dbReference>
<dbReference type="SMART" id="SM00729">
    <property type="entry name" value="Elp3"/>
    <property type="match status" value="1"/>
</dbReference>
<dbReference type="SUPFAM" id="SSF102114">
    <property type="entry name" value="Radical SAM enzymes"/>
    <property type="match status" value="1"/>
</dbReference>
<dbReference type="PROSITE" id="PS51449">
    <property type="entry name" value="MTTASE_N"/>
    <property type="match status" value="1"/>
</dbReference>
<dbReference type="PROSITE" id="PS01278">
    <property type="entry name" value="MTTASE_RADICAL"/>
    <property type="match status" value="1"/>
</dbReference>
<dbReference type="PROSITE" id="PS51918">
    <property type="entry name" value="RADICAL_SAM"/>
    <property type="match status" value="1"/>
</dbReference>
<dbReference type="PROSITE" id="PS50926">
    <property type="entry name" value="TRAM"/>
    <property type="match status" value="1"/>
</dbReference>